<organism>
    <name type="scientific">Danio rerio</name>
    <name type="common">Zebrafish</name>
    <name type="synonym">Brachydanio rerio</name>
    <dbReference type="NCBI Taxonomy" id="7955"/>
    <lineage>
        <taxon>Eukaryota</taxon>
        <taxon>Metazoa</taxon>
        <taxon>Chordata</taxon>
        <taxon>Craniata</taxon>
        <taxon>Vertebrata</taxon>
        <taxon>Euteleostomi</taxon>
        <taxon>Actinopterygii</taxon>
        <taxon>Neopterygii</taxon>
        <taxon>Teleostei</taxon>
        <taxon>Ostariophysi</taxon>
        <taxon>Cypriniformes</taxon>
        <taxon>Danionidae</taxon>
        <taxon>Danioninae</taxon>
        <taxon>Danio</taxon>
    </lineage>
</organism>
<name>MCL1B_DANRE</name>
<proteinExistence type="evidence at transcript level"/>
<reference key="1">
    <citation type="journal article" date="2013" name="Nature">
        <title>The zebrafish reference genome sequence and its relationship to the human genome.</title>
        <authorList>
            <person name="Howe K."/>
            <person name="Clark M.D."/>
            <person name="Torroja C.F."/>
            <person name="Torrance J."/>
            <person name="Berthelot C."/>
            <person name="Muffato M."/>
            <person name="Collins J.E."/>
            <person name="Humphray S."/>
            <person name="McLaren K."/>
            <person name="Matthews L."/>
            <person name="McLaren S."/>
            <person name="Sealy I."/>
            <person name="Caccamo M."/>
            <person name="Churcher C."/>
            <person name="Scott C."/>
            <person name="Barrett J.C."/>
            <person name="Koch R."/>
            <person name="Rauch G.J."/>
            <person name="White S."/>
            <person name="Chow W."/>
            <person name="Kilian B."/>
            <person name="Quintais L.T."/>
            <person name="Guerra-Assuncao J.A."/>
            <person name="Zhou Y."/>
            <person name="Gu Y."/>
            <person name="Yen J."/>
            <person name="Vogel J.H."/>
            <person name="Eyre T."/>
            <person name="Redmond S."/>
            <person name="Banerjee R."/>
            <person name="Chi J."/>
            <person name="Fu B."/>
            <person name="Langley E."/>
            <person name="Maguire S.F."/>
            <person name="Laird G.K."/>
            <person name="Lloyd D."/>
            <person name="Kenyon E."/>
            <person name="Donaldson S."/>
            <person name="Sehra H."/>
            <person name="Almeida-King J."/>
            <person name="Loveland J."/>
            <person name="Trevanion S."/>
            <person name="Jones M."/>
            <person name="Quail M."/>
            <person name="Willey D."/>
            <person name="Hunt A."/>
            <person name="Burton J."/>
            <person name="Sims S."/>
            <person name="McLay K."/>
            <person name="Plumb B."/>
            <person name="Davis J."/>
            <person name="Clee C."/>
            <person name="Oliver K."/>
            <person name="Clark R."/>
            <person name="Riddle C."/>
            <person name="Elliot D."/>
            <person name="Threadgold G."/>
            <person name="Harden G."/>
            <person name="Ware D."/>
            <person name="Begum S."/>
            <person name="Mortimore B."/>
            <person name="Kerry G."/>
            <person name="Heath P."/>
            <person name="Phillimore B."/>
            <person name="Tracey A."/>
            <person name="Corby N."/>
            <person name="Dunn M."/>
            <person name="Johnson C."/>
            <person name="Wood J."/>
            <person name="Clark S."/>
            <person name="Pelan S."/>
            <person name="Griffiths G."/>
            <person name="Smith M."/>
            <person name="Glithero R."/>
            <person name="Howden P."/>
            <person name="Barker N."/>
            <person name="Lloyd C."/>
            <person name="Stevens C."/>
            <person name="Harley J."/>
            <person name="Holt K."/>
            <person name="Panagiotidis G."/>
            <person name="Lovell J."/>
            <person name="Beasley H."/>
            <person name="Henderson C."/>
            <person name="Gordon D."/>
            <person name="Auger K."/>
            <person name="Wright D."/>
            <person name="Collins J."/>
            <person name="Raisen C."/>
            <person name="Dyer L."/>
            <person name="Leung K."/>
            <person name="Robertson L."/>
            <person name="Ambridge K."/>
            <person name="Leongamornlert D."/>
            <person name="McGuire S."/>
            <person name="Gilderthorp R."/>
            <person name="Griffiths C."/>
            <person name="Manthravadi D."/>
            <person name="Nichol S."/>
            <person name="Barker G."/>
            <person name="Whitehead S."/>
            <person name="Kay M."/>
            <person name="Brown J."/>
            <person name="Murnane C."/>
            <person name="Gray E."/>
            <person name="Humphries M."/>
            <person name="Sycamore N."/>
            <person name="Barker D."/>
            <person name="Saunders D."/>
            <person name="Wallis J."/>
            <person name="Babbage A."/>
            <person name="Hammond S."/>
            <person name="Mashreghi-Mohammadi M."/>
            <person name="Barr L."/>
            <person name="Martin S."/>
            <person name="Wray P."/>
            <person name="Ellington A."/>
            <person name="Matthews N."/>
            <person name="Ellwood M."/>
            <person name="Woodmansey R."/>
            <person name="Clark G."/>
            <person name="Cooper J."/>
            <person name="Tromans A."/>
            <person name="Grafham D."/>
            <person name="Skuce C."/>
            <person name="Pandian R."/>
            <person name="Andrews R."/>
            <person name="Harrison E."/>
            <person name="Kimberley A."/>
            <person name="Garnett J."/>
            <person name="Fosker N."/>
            <person name="Hall R."/>
            <person name="Garner P."/>
            <person name="Kelly D."/>
            <person name="Bird C."/>
            <person name="Palmer S."/>
            <person name="Gehring I."/>
            <person name="Berger A."/>
            <person name="Dooley C.M."/>
            <person name="Ersan-Urun Z."/>
            <person name="Eser C."/>
            <person name="Geiger H."/>
            <person name="Geisler M."/>
            <person name="Karotki L."/>
            <person name="Kirn A."/>
            <person name="Konantz J."/>
            <person name="Konantz M."/>
            <person name="Oberlander M."/>
            <person name="Rudolph-Geiger S."/>
            <person name="Teucke M."/>
            <person name="Lanz C."/>
            <person name="Raddatz G."/>
            <person name="Osoegawa K."/>
            <person name="Zhu B."/>
            <person name="Rapp A."/>
            <person name="Widaa S."/>
            <person name="Langford C."/>
            <person name="Yang F."/>
            <person name="Schuster S.C."/>
            <person name="Carter N.P."/>
            <person name="Harrow J."/>
            <person name="Ning Z."/>
            <person name="Herrero J."/>
            <person name="Searle S.M."/>
            <person name="Enright A."/>
            <person name="Geisler R."/>
            <person name="Plasterk R.H."/>
            <person name="Lee C."/>
            <person name="Westerfield M."/>
            <person name="de Jong P.J."/>
            <person name="Zon L.I."/>
            <person name="Postlethwait J.H."/>
            <person name="Nusslein-Volhard C."/>
            <person name="Hubbard T.J."/>
            <person name="Roest Crollius H."/>
            <person name="Rogers J."/>
            <person name="Stemple D.L."/>
        </authorList>
    </citation>
    <scope>NUCLEOTIDE SEQUENCE [LARGE SCALE GENOMIC DNA]</scope>
    <source>
        <strain>Tuebingen</strain>
    </source>
</reference>
<reference evidence="5" key="2">
    <citation type="submission" date="2006-09" db="EMBL/GenBank/DDBJ databases">
        <authorList>
            <consortium name="NIH - Zebrafish Gene Collection (ZGC) project"/>
        </authorList>
    </citation>
    <scope>NUCLEOTIDE SEQUENCE [LARGE SCALE MRNA]</scope>
    <source>
        <strain>SJD</strain>
    </source>
</reference>
<protein>
    <recommendedName>
        <fullName>Protein L-Myc-1b</fullName>
    </recommendedName>
</protein>
<dbReference type="EMBL" id="BX547927">
    <property type="protein sequence ID" value="CAK04288.1"/>
    <property type="molecule type" value="Genomic_DNA"/>
</dbReference>
<dbReference type="EMBL" id="BC124204">
    <property type="protein sequence ID" value="AAI24205.1"/>
    <property type="molecule type" value="mRNA"/>
</dbReference>
<dbReference type="RefSeq" id="NP_001038607.1">
    <property type="nucleotide sequence ID" value="NM_001045142.1"/>
</dbReference>
<dbReference type="SMR" id="Q1LWL8"/>
<dbReference type="FunCoup" id="Q1LWL8">
    <property type="interactions" value="157"/>
</dbReference>
<dbReference type="STRING" id="7955.ENSDARP00000094300"/>
<dbReference type="PaxDb" id="7955-ENSDARP00000094300"/>
<dbReference type="Ensembl" id="ENSDART00000103524">
    <property type="protein sequence ID" value="ENSDARP00000094300"/>
    <property type="gene ID" value="ENSDARG00000034956"/>
</dbReference>
<dbReference type="Ensembl" id="ENSDART00000184875">
    <property type="protein sequence ID" value="ENSDARP00000150895"/>
    <property type="gene ID" value="ENSDARG00000034956"/>
</dbReference>
<dbReference type="Ensembl" id="ENSDART00000187012">
    <property type="protein sequence ID" value="ENSDARP00000144989"/>
    <property type="gene ID" value="ENSDARG00000110185"/>
</dbReference>
<dbReference type="GeneID" id="567762"/>
<dbReference type="KEGG" id="dre:567762"/>
<dbReference type="AGR" id="ZFIN:ZDB-GENE-030131-5561"/>
<dbReference type="CTD" id="567762"/>
<dbReference type="ZFIN" id="ZDB-GENE-030131-5561">
    <property type="gene designation" value="myclb"/>
</dbReference>
<dbReference type="eggNOG" id="ENOG502QWSU">
    <property type="taxonomic scope" value="Eukaryota"/>
</dbReference>
<dbReference type="HOGENOM" id="CLU_052560_0_0_1"/>
<dbReference type="InParanoid" id="Q1LWL8"/>
<dbReference type="OMA" id="CGRNYAS"/>
<dbReference type="OrthoDB" id="5964374at2759"/>
<dbReference type="PhylomeDB" id="Q1LWL8"/>
<dbReference type="TreeFam" id="TF106001"/>
<dbReference type="PRO" id="PR:Q1LWL8"/>
<dbReference type="Proteomes" id="UP000000437">
    <property type="component" value="Alternate scaffold 19"/>
</dbReference>
<dbReference type="Proteomes" id="UP000000437">
    <property type="component" value="Chromosome 19"/>
</dbReference>
<dbReference type="Bgee" id="ENSDARG00000034956">
    <property type="expression patterns" value="Expressed in presomitic mesoderm and 28 other cell types or tissues"/>
</dbReference>
<dbReference type="ExpressionAtlas" id="Q1LWL8">
    <property type="expression patterns" value="baseline and differential"/>
</dbReference>
<dbReference type="GO" id="GO:0005634">
    <property type="term" value="C:nucleus"/>
    <property type="evidence" value="ECO:0007669"/>
    <property type="project" value="UniProtKB-SubCell"/>
</dbReference>
<dbReference type="GO" id="GO:0000981">
    <property type="term" value="F:DNA-binding transcription factor activity, RNA polymerase II-specific"/>
    <property type="evidence" value="ECO:0000318"/>
    <property type="project" value="GO_Central"/>
</dbReference>
<dbReference type="GO" id="GO:0046983">
    <property type="term" value="F:protein dimerization activity"/>
    <property type="evidence" value="ECO:0007669"/>
    <property type="project" value="InterPro"/>
</dbReference>
<dbReference type="GO" id="GO:0000978">
    <property type="term" value="F:RNA polymerase II cis-regulatory region sequence-specific DNA binding"/>
    <property type="evidence" value="ECO:0000318"/>
    <property type="project" value="GO_Central"/>
</dbReference>
<dbReference type="GO" id="GO:0006357">
    <property type="term" value="P:regulation of transcription by RNA polymerase II"/>
    <property type="evidence" value="ECO:0000318"/>
    <property type="project" value="GO_Central"/>
</dbReference>
<dbReference type="CDD" id="cd11457">
    <property type="entry name" value="bHLHzip_L-Myc"/>
    <property type="match status" value="1"/>
</dbReference>
<dbReference type="FunFam" id="4.10.280.10:FF:000019">
    <property type="entry name" value="Myc proto-oncogene protein"/>
    <property type="match status" value="1"/>
</dbReference>
<dbReference type="Gene3D" id="4.10.280.10">
    <property type="entry name" value="Helix-loop-helix DNA-binding domain"/>
    <property type="match status" value="1"/>
</dbReference>
<dbReference type="InterPro" id="IPR011598">
    <property type="entry name" value="bHLH_dom"/>
</dbReference>
<dbReference type="InterPro" id="IPR036638">
    <property type="entry name" value="HLH_DNA-bd_sf"/>
</dbReference>
<dbReference type="InterPro" id="IPR050433">
    <property type="entry name" value="Myc_transcription_factors"/>
</dbReference>
<dbReference type="InterPro" id="IPR002418">
    <property type="entry name" value="Tscrpt_reg_Myc"/>
</dbReference>
<dbReference type="InterPro" id="IPR012682">
    <property type="entry name" value="Tscrpt_reg_Myc_N"/>
</dbReference>
<dbReference type="PANTHER" id="PTHR45851">
    <property type="entry name" value="MYC PROTO-ONCOGENE"/>
    <property type="match status" value="1"/>
</dbReference>
<dbReference type="Pfam" id="PF00010">
    <property type="entry name" value="HLH"/>
    <property type="match status" value="1"/>
</dbReference>
<dbReference type="Pfam" id="PF01056">
    <property type="entry name" value="Myc_N"/>
    <property type="match status" value="2"/>
</dbReference>
<dbReference type="PIRSF" id="PIRSF001705">
    <property type="entry name" value="Myc_protein"/>
    <property type="match status" value="1"/>
</dbReference>
<dbReference type="PRINTS" id="PR00044">
    <property type="entry name" value="LEUZIPPRMYC"/>
</dbReference>
<dbReference type="SMART" id="SM00353">
    <property type="entry name" value="HLH"/>
    <property type="match status" value="1"/>
</dbReference>
<dbReference type="SUPFAM" id="SSF47459">
    <property type="entry name" value="HLH, helix-loop-helix DNA-binding domain"/>
    <property type="match status" value="1"/>
</dbReference>
<dbReference type="PROSITE" id="PS50888">
    <property type="entry name" value="BHLH"/>
    <property type="match status" value="1"/>
</dbReference>
<evidence type="ECO:0000250" key="1"/>
<evidence type="ECO:0000250" key="2">
    <source>
        <dbReference type="UniProtKB" id="P12524"/>
    </source>
</evidence>
<evidence type="ECO:0000255" key="3">
    <source>
        <dbReference type="PROSITE-ProRule" id="PRU00981"/>
    </source>
</evidence>
<evidence type="ECO:0000256" key="4">
    <source>
        <dbReference type="SAM" id="MobiDB-lite"/>
    </source>
</evidence>
<evidence type="ECO:0000312" key="5">
    <source>
        <dbReference type="EMBL" id="CAK04288.1"/>
    </source>
</evidence>
<evidence type="ECO:0000312" key="6">
    <source>
        <dbReference type="ZFIN" id="ZDB-GENE-030131-5561"/>
    </source>
</evidence>
<gene>
    <name evidence="6" type="primary">mycl1b</name>
    <name type="ORF">si:ch211-194e15.2</name>
    <name type="ORF">zgc:152988</name>
</gene>
<accession>Q1LWL8</accession>
<comment type="subunit">
    <text evidence="1">Efficient DNA binding requires dimerization with another bHLH protein. Binds DNA as a heterodimer with max (By similarity).</text>
</comment>
<comment type="subcellular location">
    <subcellularLocation>
        <location evidence="2 3">Nucleus</location>
    </subcellularLocation>
</comment>
<feature type="chain" id="PRO_0000271178" description="Protein L-Myc-1b">
    <location>
        <begin position="1"/>
        <end position="404"/>
    </location>
</feature>
<feature type="domain" description="bHLH" evidence="3">
    <location>
        <begin position="321"/>
        <end position="373"/>
    </location>
</feature>
<feature type="region of interest" description="Disordered" evidence="4">
    <location>
        <begin position="175"/>
        <end position="195"/>
    </location>
</feature>
<feature type="region of interest" description="Disordered" evidence="4">
    <location>
        <begin position="238"/>
        <end position="331"/>
    </location>
</feature>
<feature type="region of interest" description="Leucine-zipper">
    <location>
        <begin position="373"/>
        <end position="401"/>
    </location>
</feature>
<feature type="compositionally biased region" description="Polar residues" evidence="4">
    <location>
        <begin position="287"/>
        <end position="315"/>
    </location>
</feature>
<sequence>MPGISASASRIKKWEMEEYDQYQHYFYDDHNLDEDFFKSTAPSEDIWKKFELVPTPPMSPVRILEGSGPSPGDRLEWVSQFLGQDDEQEGLCKLNAEETLENLSSIIIQDCMWSSFSASQQLEKVVSERLSCSAQSKLSGKAQCVPADVPALNSLATDCVDPAAVLTFPLSSSCKKQVSSGSESRTDSSDDEEIDVVTVEHKQNKSRLVNARKPVTITVRADPHDPCMKRFHISIHQQQHNYAARSPDSYPEEEPPRKKIRQEIVQPRLASTPQTPERKSPLPSPSVPAQSPTVSASPTHTSYHLKSQPSSPQSSDCEDTDKRKTHNFLERKRRNDLRSRFLALRDEIPGLVDCPKTPKVVILTKATEYLRTLHVSDRQKAQEKKQLKSKQQQLLRRLAELKRA</sequence>
<keyword id="KW-0238">DNA-binding</keyword>
<keyword id="KW-0539">Nucleus</keyword>
<keyword id="KW-1185">Reference proteome</keyword>